<organism>
    <name type="scientific">Mus musculus</name>
    <name type="common">Mouse</name>
    <dbReference type="NCBI Taxonomy" id="10090"/>
    <lineage>
        <taxon>Eukaryota</taxon>
        <taxon>Metazoa</taxon>
        <taxon>Chordata</taxon>
        <taxon>Craniata</taxon>
        <taxon>Vertebrata</taxon>
        <taxon>Euteleostomi</taxon>
        <taxon>Mammalia</taxon>
        <taxon>Eutheria</taxon>
        <taxon>Euarchontoglires</taxon>
        <taxon>Glires</taxon>
        <taxon>Rodentia</taxon>
        <taxon>Myomorpha</taxon>
        <taxon>Muroidea</taxon>
        <taxon>Muridae</taxon>
        <taxon>Murinae</taxon>
        <taxon>Mus</taxon>
        <taxon>Mus</taxon>
    </lineage>
</organism>
<evidence type="ECO:0000250" key="1"/>
<evidence type="ECO:0000250" key="2">
    <source>
        <dbReference type="UniProtKB" id="Q9BTP7"/>
    </source>
</evidence>
<evidence type="ECO:0000305" key="3"/>
<keyword id="KW-0227">DNA damage</keyword>
<keyword id="KW-0234">DNA repair</keyword>
<keyword id="KW-0238">DNA-binding</keyword>
<keyword id="KW-0539">Nucleus</keyword>
<keyword id="KW-1185">Reference proteome</keyword>
<comment type="function">
    <text evidence="1">Plays a role in DNA repair through recruitment of the FA core complex to damaged DNA. Regulates FANCD2 monoubiquitination upon DNA damage. Induces chromosomal instability as well as hypersensitivity to DNA cross-linking agents, when repressed. Targets FANCM/FAAP24 complex to the DNA, preferentially to single strand DNA (By similarity).</text>
</comment>
<comment type="subunit">
    <text evidence="1">Belongs to the multisubunit FA complex composed of FANCA, FANCB, FANCC, FANCE, FANCF, FANCG, FANCL/PHF9, FANCM and FAAP24. Interacts with FANCM (By similarity).</text>
</comment>
<comment type="subcellular location">
    <subcellularLocation>
        <location evidence="1">Nucleus</location>
    </subcellularLocation>
</comment>
<comment type="domain">
    <text>The C-terminal region is distantly related to RuvA domain 2, a DNA-binding domain.</text>
</comment>
<accession>Q8BHL6</accession>
<accession>Q3TLJ2</accession>
<proteinExistence type="evidence at transcript level"/>
<name>FAP24_MOUSE</name>
<protein>
    <recommendedName>
        <fullName evidence="2">Fanconi anemia core complex-associated protein 24</fullName>
    </recommendedName>
    <alternativeName>
        <fullName>Fanconi anemia-associated protein of 24 kDa</fullName>
    </alternativeName>
</protein>
<sequence length="221" mass="24641">MERNPPDGTGPVHVPLGHIVASEKWRGSQLAQEMQGKVRLIFEEGLASADFYLSSKSCILYVTEADLVAGHGYRKRLARFRNSSHLQGIIIVEKTQMSEQYFPAVQKFTVLDLGMVLLPVASQSEASCLIIHLVQEQTREPSKNPFLRKKRSMLSELSLVQTVQQIPGVGKVKAPLLLQKFPSIQQLSNASVQELEEVVGPAAAQQIHTFFTQPKRQQPRS</sequence>
<reference key="1">
    <citation type="journal article" date="2005" name="Science">
        <title>The transcriptional landscape of the mammalian genome.</title>
        <authorList>
            <person name="Carninci P."/>
            <person name="Kasukawa T."/>
            <person name="Katayama S."/>
            <person name="Gough J."/>
            <person name="Frith M.C."/>
            <person name="Maeda N."/>
            <person name="Oyama R."/>
            <person name="Ravasi T."/>
            <person name="Lenhard B."/>
            <person name="Wells C."/>
            <person name="Kodzius R."/>
            <person name="Shimokawa K."/>
            <person name="Bajic V.B."/>
            <person name="Brenner S.E."/>
            <person name="Batalov S."/>
            <person name="Forrest A.R."/>
            <person name="Zavolan M."/>
            <person name="Davis M.J."/>
            <person name="Wilming L.G."/>
            <person name="Aidinis V."/>
            <person name="Allen J.E."/>
            <person name="Ambesi-Impiombato A."/>
            <person name="Apweiler R."/>
            <person name="Aturaliya R.N."/>
            <person name="Bailey T.L."/>
            <person name="Bansal M."/>
            <person name="Baxter L."/>
            <person name="Beisel K.W."/>
            <person name="Bersano T."/>
            <person name="Bono H."/>
            <person name="Chalk A.M."/>
            <person name="Chiu K.P."/>
            <person name="Choudhary V."/>
            <person name="Christoffels A."/>
            <person name="Clutterbuck D.R."/>
            <person name="Crowe M.L."/>
            <person name="Dalla E."/>
            <person name="Dalrymple B.P."/>
            <person name="de Bono B."/>
            <person name="Della Gatta G."/>
            <person name="di Bernardo D."/>
            <person name="Down T."/>
            <person name="Engstrom P."/>
            <person name="Fagiolini M."/>
            <person name="Faulkner G."/>
            <person name="Fletcher C.F."/>
            <person name="Fukushima T."/>
            <person name="Furuno M."/>
            <person name="Futaki S."/>
            <person name="Gariboldi M."/>
            <person name="Georgii-Hemming P."/>
            <person name="Gingeras T.R."/>
            <person name="Gojobori T."/>
            <person name="Green R.E."/>
            <person name="Gustincich S."/>
            <person name="Harbers M."/>
            <person name="Hayashi Y."/>
            <person name="Hensch T.K."/>
            <person name="Hirokawa N."/>
            <person name="Hill D."/>
            <person name="Huminiecki L."/>
            <person name="Iacono M."/>
            <person name="Ikeo K."/>
            <person name="Iwama A."/>
            <person name="Ishikawa T."/>
            <person name="Jakt M."/>
            <person name="Kanapin A."/>
            <person name="Katoh M."/>
            <person name="Kawasawa Y."/>
            <person name="Kelso J."/>
            <person name="Kitamura H."/>
            <person name="Kitano H."/>
            <person name="Kollias G."/>
            <person name="Krishnan S.P."/>
            <person name="Kruger A."/>
            <person name="Kummerfeld S.K."/>
            <person name="Kurochkin I.V."/>
            <person name="Lareau L.F."/>
            <person name="Lazarevic D."/>
            <person name="Lipovich L."/>
            <person name="Liu J."/>
            <person name="Liuni S."/>
            <person name="McWilliam S."/>
            <person name="Madan Babu M."/>
            <person name="Madera M."/>
            <person name="Marchionni L."/>
            <person name="Matsuda H."/>
            <person name="Matsuzawa S."/>
            <person name="Miki H."/>
            <person name="Mignone F."/>
            <person name="Miyake S."/>
            <person name="Morris K."/>
            <person name="Mottagui-Tabar S."/>
            <person name="Mulder N."/>
            <person name="Nakano N."/>
            <person name="Nakauchi H."/>
            <person name="Ng P."/>
            <person name="Nilsson R."/>
            <person name="Nishiguchi S."/>
            <person name="Nishikawa S."/>
            <person name="Nori F."/>
            <person name="Ohara O."/>
            <person name="Okazaki Y."/>
            <person name="Orlando V."/>
            <person name="Pang K.C."/>
            <person name="Pavan W.J."/>
            <person name="Pavesi G."/>
            <person name="Pesole G."/>
            <person name="Petrovsky N."/>
            <person name="Piazza S."/>
            <person name="Reed J."/>
            <person name="Reid J.F."/>
            <person name="Ring B.Z."/>
            <person name="Ringwald M."/>
            <person name="Rost B."/>
            <person name="Ruan Y."/>
            <person name="Salzberg S.L."/>
            <person name="Sandelin A."/>
            <person name="Schneider C."/>
            <person name="Schoenbach C."/>
            <person name="Sekiguchi K."/>
            <person name="Semple C.A."/>
            <person name="Seno S."/>
            <person name="Sessa L."/>
            <person name="Sheng Y."/>
            <person name="Shibata Y."/>
            <person name="Shimada H."/>
            <person name="Shimada K."/>
            <person name="Silva D."/>
            <person name="Sinclair B."/>
            <person name="Sperling S."/>
            <person name="Stupka E."/>
            <person name="Sugiura K."/>
            <person name="Sultana R."/>
            <person name="Takenaka Y."/>
            <person name="Taki K."/>
            <person name="Tammoja K."/>
            <person name="Tan S.L."/>
            <person name="Tang S."/>
            <person name="Taylor M.S."/>
            <person name="Tegner J."/>
            <person name="Teichmann S.A."/>
            <person name="Ueda H.R."/>
            <person name="van Nimwegen E."/>
            <person name="Verardo R."/>
            <person name="Wei C.L."/>
            <person name="Yagi K."/>
            <person name="Yamanishi H."/>
            <person name="Zabarovsky E."/>
            <person name="Zhu S."/>
            <person name="Zimmer A."/>
            <person name="Hide W."/>
            <person name="Bult C."/>
            <person name="Grimmond S.M."/>
            <person name="Teasdale R.D."/>
            <person name="Liu E.T."/>
            <person name="Brusic V."/>
            <person name="Quackenbush J."/>
            <person name="Wahlestedt C."/>
            <person name="Mattick J.S."/>
            <person name="Hume D.A."/>
            <person name="Kai C."/>
            <person name="Sasaki D."/>
            <person name="Tomaru Y."/>
            <person name="Fukuda S."/>
            <person name="Kanamori-Katayama M."/>
            <person name="Suzuki M."/>
            <person name="Aoki J."/>
            <person name="Arakawa T."/>
            <person name="Iida J."/>
            <person name="Imamura K."/>
            <person name="Itoh M."/>
            <person name="Kato T."/>
            <person name="Kawaji H."/>
            <person name="Kawagashira N."/>
            <person name="Kawashima T."/>
            <person name="Kojima M."/>
            <person name="Kondo S."/>
            <person name="Konno H."/>
            <person name="Nakano K."/>
            <person name="Ninomiya N."/>
            <person name="Nishio T."/>
            <person name="Okada M."/>
            <person name="Plessy C."/>
            <person name="Shibata K."/>
            <person name="Shiraki T."/>
            <person name="Suzuki S."/>
            <person name="Tagami M."/>
            <person name="Waki K."/>
            <person name="Watahiki A."/>
            <person name="Okamura-Oho Y."/>
            <person name="Suzuki H."/>
            <person name="Kawai J."/>
            <person name="Hayashizaki Y."/>
        </authorList>
    </citation>
    <scope>NUCLEOTIDE SEQUENCE [LARGE SCALE MRNA]</scope>
    <source>
        <strain>C57BL/6J</strain>
        <tissue>Cerebellum</tissue>
        <tissue>Mammary gland</tissue>
        <tissue>Testis</tissue>
        <tissue>Thymus</tissue>
    </source>
</reference>
<reference key="2">
    <citation type="journal article" date="2004" name="Genome Res.">
        <title>The status, quality, and expansion of the NIH full-length cDNA project: the Mammalian Gene Collection (MGC).</title>
        <authorList>
            <consortium name="The MGC Project Team"/>
        </authorList>
    </citation>
    <scope>NUCLEOTIDE SEQUENCE [LARGE SCALE MRNA]</scope>
    <source>
        <tissue>Uterus</tissue>
    </source>
</reference>
<dbReference type="EMBL" id="AK031566">
    <property type="protein sequence ID" value="BAC27452.1"/>
    <property type="molecule type" value="mRNA"/>
</dbReference>
<dbReference type="EMBL" id="AK040248">
    <property type="protein sequence ID" value="BAC30550.1"/>
    <property type="molecule type" value="mRNA"/>
</dbReference>
<dbReference type="EMBL" id="AK082457">
    <property type="protein sequence ID" value="BAC38495.1"/>
    <property type="molecule type" value="mRNA"/>
</dbReference>
<dbReference type="EMBL" id="AK166481">
    <property type="protein sequence ID" value="BAE38800.1"/>
    <property type="molecule type" value="mRNA"/>
</dbReference>
<dbReference type="EMBL" id="BC096687">
    <property type="protein sequence ID" value="AAH96687.1"/>
    <property type="molecule type" value="mRNA"/>
</dbReference>
<dbReference type="CCDS" id="CCDS21149.1"/>
<dbReference type="RefSeq" id="NP_848758.1">
    <property type="nucleotide sequence ID" value="NM_178643.5"/>
</dbReference>
<dbReference type="SMR" id="Q8BHL6"/>
<dbReference type="BioGRID" id="221736">
    <property type="interactions" value="1"/>
</dbReference>
<dbReference type="FunCoup" id="Q8BHL6">
    <property type="interactions" value="2672"/>
</dbReference>
<dbReference type="STRING" id="10090.ENSMUSP00000032704"/>
<dbReference type="PhosphoSitePlus" id="Q8BHL6"/>
<dbReference type="PaxDb" id="10090-ENSMUSP00000032704"/>
<dbReference type="ProteomicsDB" id="267715"/>
<dbReference type="Antibodypedia" id="47946">
    <property type="antibodies" value="35 antibodies from 13 providers"/>
</dbReference>
<dbReference type="DNASU" id="101831"/>
<dbReference type="Ensembl" id="ENSMUST00000032704.12">
    <property type="protein sequence ID" value="ENSMUSP00000032704.6"/>
    <property type="gene ID" value="ENSMUSG00000030493.14"/>
</dbReference>
<dbReference type="Ensembl" id="ENSMUST00000154597.2">
    <property type="protein sequence ID" value="ENSMUSP00000115766.2"/>
    <property type="gene ID" value="ENSMUSG00000030493.14"/>
</dbReference>
<dbReference type="GeneID" id="101831"/>
<dbReference type="KEGG" id="mmu:101831"/>
<dbReference type="UCSC" id="uc009gjt.1">
    <property type="organism name" value="mouse"/>
</dbReference>
<dbReference type="AGR" id="MGI:2142208"/>
<dbReference type="CTD" id="91442"/>
<dbReference type="MGI" id="MGI:2142208">
    <property type="gene designation" value="Faap24"/>
</dbReference>
<dbReference type="VEuPathDB" id="HostDB:ENSMUSG00000030493"/>
<dbReference type="eggNOG" id="KOG2841">
    <property type="taxonomic scope" value="Eukaryota"/>
</dbReference>
<dbReference type="GeneTree" id="ENSGT00390000009456"/>
<dbReference type="HOGENOM" id="CLU_111628_0_0_1"/>
<dbReference type="InParanoid" id="Q8BHL6"/>
<dbReference type="OMA" id="GPVHVPF"/>
<dbReference type="OrthoDB" id="5975714at2759"/>
<dbReference type="PhylomeDB" id="Q8BHL6"/>
<dbReference type="TreeFam" id="TF333015"/>
<dbReference type="Reactome" id="R-MMU-6783310">
    <property type="pathway name" value="Fanconi Anemia Pathway"/>
</dbReference>
<dbReference type="Reactome" id="R-MMU-9833482">
    <property type="pathway name" value="PKR-mediated signaling"/>
</dbReference>
<dbReference type="BioGRID-ORCS" id="101831">
    <property type="hits" value="8 hits in 79 CRISPR screens"/>
</dbReference>
<dbReference type="ChiTaRS" id="Faap24">
    <property type="organism name" value="mouse"/>
</dbReference>
<dbReference type="PRO" id="PR:Q8BHL6"/>
<dbReference type="Proteomes" id="UP000000589">
    <property type="component" value="Chromosome 7"/>
</dbReference>
<dbReference type="RNAct" id="Q8BHL6">
    <property type="molecule type" value="protein"/>
</dbReference>
<dbReference type="Bgee" id="ENSMUSG00000030493">
    <property type="expression patterns" value="Expressed in fetal liver hematopoietic progenitor cell and 244 other cell types or tissues"/>
</dbReference>
<dbReference type="GO" id="GO:0000785">
    <property type="term" value="C:chromatin"/>
    <property type="evidence" value="ECO:0007669"/>
    <property type="project" value="Ensembl"/>
</dbReference>
<dbReference type="GO" id="GO:0071821">
    <property type="term" value="C:FANCM-MHF complex"/>
    <property type="evidence" value="ECO:0007669"/>
    <property type="project" value="Ensembl"/>
</dbReference>
<dbReference type="GO" id="GO:0043240">
    <property type="term" value="C:Fanconi anaemia nuclear complex"/>
    <property type="evidence" value="ECO:0000250"/>
    <property type="project" value="UniProtKB"/>
</dbReference>
<dbReference type="GO" id="GO:0005654">
    <property type="term" value="C:nucleoplasm"/>
    <property type="evidence" value="ECO:0007669"/>
    <property type="project" value="Ensembl"/>
</dbReference>
<dbReference type="GO" id="GO:0003682">
    <property type="term" value="F:chromatin binding"/>
    <property type="evidence" value="ECO:0000250"/>
    <property type="project" value="UniProtKB"/>
</dbReference>
<dbReference type="GO" id="GO:0003677">
    <property type="term" value="F:DNA binding"/>
    <property type="evidence" value="ECO:0007669"/>
    <property type="project" value="UniProtKB-KW"/>
</dbReference>
<dbReference type="GO" id="GO:0036297">
    <property type="term" value="P:interstrand cross-link repair"/>
    <property type="evidence" value="ECO:0007669"/>
    <property type="project" value="Ensembl"/>
</dbReference>
<dbReference type="CDD" id="cd20076">
    <property type="entry name" value="XPF_nuclease_FAAP24"/>
    <property type="match status" value="1"/>
</dbReference>
<dbReference type="FunFam" id="1.10.150.20:FF:000046">
    <property type="entry name" value="Fanconi anemia core complex-associated protein 24"/>
    <property type="match status" value="1"/>
</dbReference>
<dbReference type="FunFam" id="3.40.50.10130:FF:000006">
    <property type="entry name" value="Fanconi anemia core complex-associated protein 24"/>
    <property type="match status" value="1"/>
</dbReference>
<dbReference type="Gene3D" id="3.40.50.10130">
    <property type="match status" value="1"/>
</dbReference>
<dbReference type="Gene3D" id="1.10.150.20">
    <property type="entry name" value="5' to 3' exonuclease, C-terminal subdomain"/>
    <property type="match status" value="1"/>
</dbReference>
<dbReference type="InterPro" id="IPR041663">
    <property type="entry name" value="DisA/LigA_HHH"/>
</dbReference>
<dbReference type="InterPro" id="IPR026985">
    <property type="entry name" value="FAAP24"/>
</dbReference>
<dbReference type="InterPro" id="IPR040646">
    <property type="entry name" value="PND"/>
</dbReference>
<dbReference type="InterPro" id="IPR010994">
    <property type="entry name" value="RuvA_2-like"/>
</dbReference>
<dbReference type="PANTHER" id="PTHR31786">
    <property type="entry name" value="FANCONI ANEMIA CORE COMPLEX-ASSOCIATED PROTEIN 24"/>
    <property type="match status" value="1"/>
</dbReference>
<dbReference type="PANTHER" id="PTHR31786:SF2">
    <property type="entry name" value="FANCONI ANEMIA CORE COMPLEX-ASSOCIATED PROTEIN 24"/>
    <property type="match status" value="1"/>
</dbReference>
<dbReference type="Pfam" id="PF12826">
    <property type="entry name" value="HHH_2"/>
    <property type="match status" value="1"/>
</dbReference>
<dbReference type="Pfam" id="PF17949">
    <property type="entry name" value="PND"/>
    <property type="match status" value="1"/>
</dbReference>
<dbReference type="SUPFAM" id="SSF47781">
    <property type="entry name" value="RuvA domain 2-like"/>
    <property type="match status" value="1"/>
</dbReference>
<gene>
    <name evidence="2" type="primary">Faap24</name>
</gene>
<feature type="chain" id="PRO_0000270962" description="Fanconi anemia core complex-associated protein 24">
    <location>
        <begin position="1"/>
        <end position="221"/>
    </location>
</feature>
<feature type="sequence conflict" description="In Ref. 1; BAE38800." evidence="3" ref="1">
    <original>P</original>
    <variation>R</variation>
    <location>
        <position position="175"/>
    </location>
</feature>
<feature type="sequence conflict" description="In Ref. 1; BAE38800." evidence="3" ref="1">
    <original>R</original>
    <variation>H</variation>
    <location>
        <position position="220"/>
    </location>
</feature>